<comment type="function">
    <text evidence="1">Displays ATPase and GTPase activities.</text>
</comment>
<comment type="similarity">
    <text evidence="1">Belongs to the RapZ-like family.</text>
</comment>
<organism>
    <name type="scientific">Streptococcus pyogenes serotype M1</name>
    <dbReference type="NCBI Taxonomy" id="301447"/>
    <lineage>
        <taxon>Bacteria</taxon>
        <taxon>Bacillati</taxon>
        <taxon>Bacillota</taxon>
        <taxon>Bacilli</taxon>
        <taxon>Lactobacillales</taxon>
        <taxon>Streptococcaceae</taxon>
        <taxon>Streptococcus</taxon>
    </lineage>
</organism>
<accession>P67113</accession>
<accession>Q48ZR1</accession>
<accession>Q9A0R8</accession>
<evidence type="ECO:0000255" key="1">
    <source>
        <dbReference type="HAMAP-Rule" id="MF_00636"/>
    </source>
</evidence>
<proteinExistence type="inferred from homology"/>
<keyword id="KW-0067">ATP-binding</keyword>
<keyword id="KW-0342">GTP-binding</keyword>
<keyword id="KW-0547">Nucleotide-binding</keyword>
<keyword id="KW-1185">Reference proteome</keyword>
<name>Y652_STRP1</name>
<reference key="1">
    <citation type="journal article" date="2001" name="Proc. Natl. Acad. Sci. U.S.A.">
        <title>Complete genome sequence of an M1 strain of Streptococcus pyogenes.</title>
        <authorList>
            <person name="Ferretti J.J."/>
            <person name="McShan W.M."/>
            <person name="Ajdic D.J."/>
            <person name="Savic D.J."/>
            <person name="Savic G."/>
            <person name="Lyon K."/>
            <person name="Primeaux C."/>
            <person name="Sezate S."/>
            <person name="Suvorov A.N."/>
            <person name="Kenton S."/>
            <person name="Lai H.S."/>
            <person name="Lin S.P."/>
            <person name="Qian Y."/>
            <person name="Jia H.G."/>
            <person name="Najar F.Z."/>
            <person name="Ren Q."/>
            <person name="Zhu H."/>
            <person name="Song L."/>
            <person name="White J."/>
            <person name="Yuan X."/>
            <person name="Clifton S.W."/>
            <person name="Roe B.A."/>
            <person name="McLaughlin R.E."/>
        </authorList>
    </citation>
    <scope>NUCLEOTIDE SEQUENCE [LARGE SCALE GENOMIC DNA]</scope>
    <source>
        <strain>ATCC 700294 / SF370 / Serotype M1</strain>
    </source>
</reference>
<reference key="2">
    <citation type="journal article" date="2005" name="J. Infect. Dis.">
        <title>Evolutionary origin and emergence of a highly successful clone of serotype M1 group A Streptococcus involved multiple horizontal gene transfer events.</title>
        <authorList>
            <person name="Sumby P."/>
            <person name="Porcella S.F."/>
            <person name="Madrigal A.G."/>
            <person name="Barbian K.D."/>
            <person name="Virtaneva K."/>
            <person name="Ricklefs S.M."/>
            <person name="Sturdevant D.E."/>
            <person name="Graham M.R."/>
            <person name="Vuopio-Varkila J."/>
            <person name="Hoe N.P."/>
            <person name="Musser J.M."/>
        </authorList>
    </citation>
    <scope>NUCLEOTIDE SEQUENCE [LARGE SCALE GENOMIC DNA]</scope>
    <source>
        <strain>ATCC BAA-947 / MGAS5005 / Serotype M1</strain>
    </source>
</reference>
<feature type="chain" id="PRO_0000107772" description="Nucleotide-binding protein SPy_0652/M5005_Spy0539">
    <location>
        <begin position="1"/>
        <end position="296"/>
    </location>
</feature>
<feature type="binding site" evidence="1">
    <location>
        <begin position="13"/>
        <end position="20"/>
    </location>
    <ligand>
        <name>ATP</name>
        <dbReference type="ChEBI" id="CHEBI:30616"/>
    </ligand>
</feature>
<feature type="binding site" evidence="1">
    <location>
        <begin position="63"/>
        <end position="66"/>
    </location>
    <ligand>
        <name>GTP</name>
        <dbReference type="ChEBI" id="CHEBI:37565"/>
    </ligand>
</feature>
<dbReference type="EMBL" id="AE004092">
    <property type="protein sequence ID" value="AAK33615.1"/>
    <property type="molecule type" value="Genomic_DNA"/>
</dbReference>
<dbReference type="EMBL" id="CP000017">
    <property type="protein sequence ID" value="AAZ51157.1"/>
    <property type="molecule type" value="Genomic_DNA"/>
</dbReference>
<dbReference type="RefSeq" id="NP_268894.1">
    <property type="nucleotide sequence ID" value="NC_002737.2"/>
</dbReference>
<dbReference type="SMR" id="P67113"/>
<dbReference type="PaxDb" id="1314-HKU360_00549"/>
<dbReference type="KEGG" id="spy:SPy_0652"/>
<dbReference type="KEGG" id="spz:M5005_Spy0539"/>
<dbReference type="PATRIC" id="fig|160490.10.peg.554"/>
<dbReference type="HOGENOM" id="CLU_059558_0_0_9"/>
<dbReference type="OMA" id="GFKHGVP"/>
<dbReference type="Proteomes" id="UP000000750">
    <property type="component" value="Chromosome"/>
</dbReference>
<dbReference type="GO" id="GO:0005524">
    <property type="term" value="F:ATP binding"/>
    <property type="evidence" value="ECO:0007669"/>
    <property type="project" value="UniProtKB-UniRule"/>
</dbReference>
<dbReference type="GO" id="GO:0005525">
    <property type="term" value="F:GTP binding"/>
    <property type="evidence" value="ECO:0007669"/>
    <property type="project" value="UniProtKB-UniRule"/>
</dbReference>
<dbReference type="Gene3D" id="3.40.50.300">
    <property type="entry name" value="P-loop containing nucleotide triphosphate hydrolases"/>
    <property type="match status" value="1"/>
</dbReference>
<dbReference type="HAMAP" id="MF_00636">
    <property type="entry name" value="RapZ_like"/>
    <property type="match status" value="1"/>
</dbReference>
<dbReference type="InterPro" id="IPR027417">
    <property type="entry name" value="P-loop_NTPase"/>
</dbReference>
<dbReference type="InterPro" id="IPR005337">
    <property type="entry name" value="RapZ-like"/>
</dbReference>
<dbReference type="InterPro" id="IPR053930">
    <property type="entry name" value="RapZ-like_N"/>
</dbReference>
<dbReference type="InterPro" id="IPR053931">
    <property type="entry name" value="RapZ_C"/>
</dbReference>
<dbReference type="NCBIfam" id="NF003828">
    <property type="entry name" value="PRK05416.1"/>
    <property type="match status" value="1"/>
</dbReference>
<dbReference type="PANTHER" id="PTHR30448">
    <property type="entry name" value="RNASE ADAPTER PROTEIN RAPZ"/>
    <property type="match status" value="1"/>
</dbReference>
<dbReference type="PANTHER" id="PTHR30448:SF0">
    <property type="entry name" value="RNASE ADAPTER PROTEIN RAPZ"/>
    <property type="match status" value="1"/>
</dbReference>
<dbReference type="Pfam" id="PF22740">
    <property type="entry name" value="PapZ_C"/>
    <property type="match status" value="1"/>
</dbReference>
<dbReference type="Pfam" id="PF03668">
    <property type="entry name" value="RapZ-like_N"/>
    <property type="match status" value="1"/>
</dbReference>
<dbReference type="PIRSF" id="PIRSF005052">
    <property type="entry name" value="P-loopkin"/>
    <property type="match status" value="1"/>
</dbReference>
<dbReference type="SUPFAM" id="SSF52540">
    <property type="entry name" value="P-loop containing nucleoside triphosphate hydrolases"/>
    <property type="match status" value="1"/>
</dbReference>
<protein>
    <recommendedName>
        <fullName evidence="1">Nucleotide-binding protein SPy_0652/M5005_Spy0539</fullName>
    </recommendedName>
</protein>
<gene>
    <name type="ordered locus">SPy_0652</name>
    <name type="ordered locus">M5005_Spy0539</name>
</gene>
<sequence length="296" mass="33587">MSDKHINLVIVTGMSGAGKTVAIQSFEDLGYFTIDNMPPALVPKFLELIEQTNENRRVALVVDMRSRLFFKEINSTLDSIESNPSIDFRILFLDATDGELVSRYKETRRSHPLAADGRVLDGIRLERELLSPLKSMSQHVVDTTKLTPRQLRKTISDQFSEGSNQASFRIEVMSFGFKYGLPLDADLVFDVRFLPNPYYQVELREKTGLDEDVFNYVMSHPESEVFYKHLLNLIVPILPAYQKEGKSVLTVAIGCTGGQHRSVAFAHCLAESLATDWSVNESHRDQNRRKETVNRS</sequence>